<feature type="chain" id="PRO_0000195374" description="Ribonuclease HI">
    <location>
        <begin position="1"/>
        <end position="155"/>
    </location>
</feature>
<feature type="domain" description="RNase H type-1" evidence="2">
    <location>
        <begin position="1"/>
        <end position="142"/>
    </location>
</feature>
<feature type="binding site" evidence="1">
    <location>
        <position position="10"/>
    </location>
    <ligand>
        <name>Mg(2+)</name>
        <dbReference type="ChEBI" id="CHEBI:18420"/>
        <label>1</label>
    </ligand>
</feature>
<feature type="binding site" evidence="1">
    <location>
        <position position="10"/>
    </location>
    <ligand>
        <name>Mg(2+)</name>
        <dbReference type="ChEBI" id="CHEBI:18420"/>
        <label>2</label>
    </ligand>
</feature>
<feature type="binding site" evidence="1">
    <location>
        <position position="48"/>
    </location>
    <ligand>
        <name>Mg(2+)</name>
        <dbReference type="ChEBI" id="CHEBI:18420"/>
        <label>1</label>
    </ligand>
</feature>
<feature type="binding site" evidence="1">
    <location>
        <position position="70"/>
    </location>
    <ligand>
        <name>Mg(2+)</name>
        <dbReference type="ChEBI" id="CHEBI:18420"/>
        <label>1</label>
    </ligand>
</feature>
<feature type="binding site" evidence="1">
    <location>
        <position position="134"/>
    </location>
    <ligand>
        <name>Mg(2+)</name>
        <dbReference type="ChEBI" id="CHEBI:18420"/>
        <label>2</label>
    </ligand>
</feature>
<proteinExistence type="inferred from homology"/>
<accession>P0A7Y5</accession>
<accession>P00647</accession>
<accession>Q8FKY5</accession>
<name>RNH_ECOL6</name>
<protein>
    <recommendedName>
        <fullName>Ribonuclease HI</fullName>
        <shortName>RNase HI</shortName>
        <ecNumber>3.1.26.4</ecNumber>
    </recommendedName>
</protein>
<comment type="function">
    <text evidence="1">Endonuclease that specifically degrades the RNA of RNA-DNA hybrids.</text>
</comment>
<comment type="catalytic activity">
    <reaction>
        <text>Endonucleolytic cleavage to 5'-phosphomonoester.</text>
        <dbReference type="EC" id="3.1.26.4"/>
    </reaction>
</comment>
<comment type="cofactor">
    <cofactor evidence="1">
        <name>Mg(2+)</name>
        <dbReference type="ChEBI" id="CHEBI:18420"/>
    </cofactor>
    <text evidence="1">Binds 1 Mg(2+) ion per subunit. May bind a second metal ion at a regulatory site, or after substrate binding.</text>
</comment>
<comment type="subunit">
    <text evidence="1">Monomer.</text>
</comment>
<comment type="subcellular location">
    <subcellularLocation>
        <location evidence="3">Cytoplasm</location>
    </subcellularLocation>
</comment>
<comment type="similarity">
    <text evidence="3">Belongs to the RNase H family.</text>
</comment>
<comment type="sequence caution" evidence="3">
    <conflict type="erroneous initiation">
        <sequence resource="EMBL-CDS" id="AAN78741"/>
    </conflict>
</comment>
<sequence>MLKQVEIFTDGSCLGNPGPGGYGAILRYRGREKTFSAGYTRTTNNRMELMAAIVALEALKEHCEVILSTDSQYVRQGITQWIHNWKKRGWKTADKKPVKNVDLWQRLDAALGQHQIKWEWVKGHAGHPENERCDELARAAAMNPTLEDTGYQVEV</sequence>
<organism>
    <name type="scientific">Escherichia coli O6:H1 (strain CFT073 / ATCC 700928 / UPEC)</name>
    <dbReference type="NCBI Taxonomy" id="199310"/>
    <lineage>
        <taxon>Bacteria</taxon>
        <taxon>Pseudomonadati</taxon>
        <taxon>Pseudomonadota</taxon>
        <taxon>Gammaproteobacteria</taxon>
        <taxon>Enterobacterales</taxon>
        <taxon>Enterobacteriaceae</taxon>
        <taxon>Escherichia</taxon>
    </lineage>
</organism>
<gene>
    <name type="primary">rnhA</name>
    <name type="ordered locus">c0251</name>
</gene>
<keyword id="KW-0963">Cytoplasm</keyword>
<keyword id="KW-0255">Endonuclease</keyword>
<keyword id="KW-0378">Hydrolase</keyword>
<keyword id="KW-0460">Magnesium</keyword>
<keyword id="KW-0479">Metal-binding</keyword>
<keyword id="KW-0540">Nuclease</keyword>
<keyword id="KW-1185">Reference proteome</keyword>
<evidence type="ECO:0000250" key="1"/>
<evidence type="ECO:0000255" key="2">
    <source>
        <dbReference type="PROSITE-ProRule" id="PRU00408"/>
    </source>
</evidence>
<evidence type="ECO:0000305" key="3"/>
<dbReference type="EC" id="3.1.26.4"/>
<dbReference type="EMBL" id="AE014075">
    <property type="protein sequence ID" value="AAN78741.1"/>
    <property type="status" value="ALT_INIT"/>
    <property type="molecule type" value="Genomic_DNA"/>
</dbReference>
<dbReference type="SMR" id="P0A7Y5"/>
<dbReference type="STRING" id="199310.c0251"/>
<dbReference type="KEGG" id="ecc:c0251"/>
<dbReference type="eggNOG" id="COG0328">
    <property type="taxonomic scope" value="Bacteria"/>
</dbReference>
<dbReference type="HOGENOM" id="CLU_030894_6_0_6"/>
<dbReference type="Proteomes" id="UP000001410">
    <property type="component" value="Chromosome"/>
</dbReference>
<dbReference type="GO" id="GO:0005737">
    <property type="term" value="C:cytoplasm"/>
    <property type="evidence" value="ECO:0007669"/>
    <property type="project" value="UniProtKB-SubCell"/>
</dbReference>
<dbReference type="GO" id="GO:0000287">
    <property type="term" value="F:magnesium ion binding"/>
    <property type="evidence" value="ECO:0007669"/>
    <property type="project" value="UniProtKB-UniRule"/>
</dbReference>
<dbReference type="GO" id="GO:0003676">
    <property type="term" value="F:nucleic acid binding"/>
    <property type="evidence" value="ECO:0007669"/>
    <property type="project" value="InterPro"/>
</dbReference>
<dbReference type="GO" id="GO:0004523">
    <property type="term" value="F:RNA-DNA hybrid ribonuclease activity"/>
    <property type="evidence" value="ECO:0007669"/>
    <property type="project" value="UniProtKB-UniRule"/>
</dbReference>
<dbReference type="GO" id="GO:0043137">
    <property type="term" value="P:DNA replication, removal of RNA primer"/>
    <property type="evidence" value="ECO:0007669"/>
    <property type="project" value="TreeGrafter"/>
</dbReference>
<dbReference type="CDD" id="cd09278">
    <property type="entry name" value="RNase_HI_prokaryote_like"/>
    <property type="match status" value="1"/>
</dbReference>
<dbReference type="FunFam" id="3.30.420.10:FF:000008">
    <property type="entry name" value="Ribonuclease H"/>
    <property type="match status" value="1"/>
</dbReference>
<dbReference type="Gene3D" id="3.30.420.10">
    <property type="entry name" value="Ribonuclease H-like superfamily/Ribonuclease H"/>
    <property type="match status" value="1"/>
</dbReference>
<dbReference type="HAMAP" id="MF_00042">
    <property type="entry name" value="RNase_H"/>
    <property type="match status" value="1"/>
</dbReference>
<dbReference type="InterPro" id="IPR050092">
    <property type="entry name" value="RNase_H"/>
</dbReference>
<dbReference type="InterPro" id="IPR012337">
    <property type="entry name" value="RNaseH-like_sf"/>
</dbReference>
<dbReference type="InterPro" id="IPR002156">
    <property type="entry name" value="RNaseH_domain"/>
</dbReference>
<dbReference type="InterPro" id="IPR036397">
    <property type="entry name" value="RNaseH_sf"/>
</dbReference>
<dbReference type="InterPro" id="IPR022892">
    <property type="entry name" value="RNaseHI"/>
</dbReference>
<dbReference type="NCBIfam" id="NF001236">
    <property type="entry name" value="PRK00203.1"/>
    <property type="match status" value="1"/>
</dbReference>
<dbReference type="PANTHER" id="PTHR10642">
    <property type="entry name" value="RIBONUCLEASE H1"/>
    <property type="match status" value="1"/>
</dbReference>
<dbReference type="PANTHER" id="PTHR10642:SF26">
    <property type="entry name" value="RIBONUCLEASE H1"/>
    <property type="match status" value="1"/>
</dbReference>
<dbReference type="Pfam" id="PF00075">
    <property type="entry name" value="RNase_H"/>
    <property type="match status" value="1"/>
</dbReference>
<dbReference type="SUPFAM" id="SSF53098">
    <property type="entry name" value="Ribonuclease H-like"/>
    <property type="match status" value="1"/>
</dbReference>
<dbReference type="PROSITE" id="PS50879">
    <property type="entry name" value="RNASE_H_1"/>
    <property type="match status" value="1"/>
</dbReference>
<reference key="1">
    <citation type="journal article" date="2002" name="Proc. Natl. Acad. Sci. U.S.A.">
        <title>Extensive mosaic structure revealed by the complete genome sequence of uropathogenic Escherichia coli.</title>
        <authorList>
            <person name="Welch R.A."/>
            <person name="Burland V."/>
            <person name="Plunkett G. III"/>
            <person name="Redford P."/>
            <person name="Roesch P."/>
            <person name="Rasko D."/>
            <person name="Buckles E.L."/>
            <person name="Liou S.-R."/>
            <person name="Boutin A."/>
            <person name="Hackett J."/>
            <person name="Stroud D."/>
            <person name="Mayhew G.F."/>
            <person name="Rose D.J."/>
            <person name="Zhou S."/>
            <person name="Schwartz D.C."/>
            <person name="Perna N.T."/>
            <person name="Mobley H.L.T."/>
            <person name="Donnenberg M.S."/>
            <person name="Blattner F.R."/>
        </authorList>
    </citation>
    <scope>NUCLEOTIDE SEQUENCE [LARGE SCALE GENOMIC DNA]</scope>
    <source>
        <strain>CFT073 / ATCC 700928 / UPEC</strain>
    </source>
</reference>